<accession>A9QYY3</accession>
<protein>
    <recommendedName>
        <fullName evidence="1">PF03932 family protein CutC</fullName>
    </recommendedName>
</protein>
<name>CUTC_YERPG</name>
<evidence type="ECO:0000255" key="1">
    <source>
        <dbReference type="HAMAP-Rule" id="MF_00795"/>
    </source>
</evidence>
<feature type="chain" id="PRO_1000133854" description="PF03932 family protein CutC">
    <location>
        <begin position="1"/>
        <end position="254"/>
    </location>
</feature>
<dbReference type="EMBL" id="CP000901">
    <property type="protein sequence ID" value="ABX85393.1"/>
    <property type="molecule type" value="Genomic_DNA"/>
</dbReference>
<dbReference type="RefSeq" id="WP_012229686.1">
    <property type="nucleotide sequence ID" value="NC_010159.1"/>
</dbReference>
<dbReference type="SMR" id="A9QYY3"/>
<dbReference type="KEGG" id="ypg:YpAngola_A2431"/>
<dbReference type="PATRIC" id="fig|349746.12.peg.3448"/>
<dbReference type="GO" id="GO:0005737">
    <property type="term" value="C:cytoplasm"/>
    <property type="evidence" value="ECO:0007669"/>
    <property type="project" value="UniProtKB-SubCell"/>
</dbReference>
<dbReference type="GO" id="GO:0005507">
    <property type="term" value="F:copper ion binding"/>
    <property type="evidence" value="ECO:0007669"/>
    <property type="project" value="TreeGrafter"/>
</dbReference>
<dbReference type="FunFam" id="3.20.20.380:FF:000001">
    <property type="entry name" value="Copper homeostasis protein CutC"/>
    <property type="match status" value="1"/>
</dbReference>
<dbReference type="Gene3D" id="3.20.20.380">
    <property type="entry name" value="Copper homeostasis (CutC) domain"/>
    <property type="match status" value="1"/>
</dbReference>
<dbReference type="HAMAP" id="MF_00795">
    <property type="entry name" value="CutC"/>
    <property type="match status" value="1"/>
</dbReference>
<dbReference type="InterPro" id="IPR005627">
    <property type="entry name" value="CutC-like"/>
</dbReference>
<dbReference type="InterPro" id="IPR036822">
    <property type="entry name" value="CutC-like_dom_sf"/>
</dbReference>
<dbReference type="NCBIfam" id="NF008603">
    <property type="entry name" value="PRK11572.1"/>
    <property type="match status" value="1"/>
</dbReference>
<dbReference type="PANTHER" id="PTHR12598">
    <property type="entry name" value="COPPER HOMEOSTASIS PROTEIN CUTC"/>
    <property type="match status" value="1"/>
</dbReference>
<dbReference type="PANTHER" id="PTHR12598:SF0">
    <property type="entry name" value="COPPER HOMEOSTASIS PROTEIN CUTC HOMOLOG"/>
    <property type="match status" value="1"/>
</dbReference>
<dbReference type="Pfam" id="PF03932">
    <property type="entry name" value="CutC"/>
    <property type="match status" value="1"/>
</dbReference>
<dbReference type="SUPFAM" id="SSF110395">
    <property type="entry name" value="CutC-like"/>
    <property type="match status" value="1"/>
</dbReference>
<gene>
    <name evidence="1" type="primary">cutC</name>
    <name type="ordered locus">YpAngola_A2431</name>
</gene>
<keyword id="KW-0963">Cytoplasm</keyword>
<proteinExistence type="inferred from homology"/>
<sequence length="254" mass="27355">MTKLEVCCYSVDCAQIAEKAGADRVELCCGQSEGGVTPSVGALMQARETVTIPVHPIVRPRGGDFCYSSNDFTIMKNDIARIRDLGFAGVVVGVLDTDGHIDMPRMREIMSVSGSLVVTFHRAFDMCQNPMIALKQLAELNVARILTSGQQQNAELGLALLKDLVAATKDQGPIIMAGAGVRLTNMQKFIDAGIRELHSSAGRTVPSTMRYRKAGVTMCADSDVDEFSHYCVDGEVVEAMKSLLVMGSPLAKHT</sequence>
<comment type="subcellular location">
    <subcellularLocation>
        <location evidence="1">Cytoplasm</location>
    </subcellularLocation>
</comment>
<comment type="similarity">
    <text evidence="1">Belongs to the CutC family.</text>
</comment>
<comment type="caution">
    <text evidence="1">Once thought to be involved in copper homeostasis, experiments in E.coli have shown this is not the case.</text>
</comment>
<reference key="1">
    <citation type="journal article" date="2010" name="J. Bacteriol.">
        <title>Genome sequence of the deep-rooted Yersinia pestis strain Angola reveals new insights into the evolution and pangenome of the plague bacterium.</title>
        <authorList>
            <person name="Eppinger M."/>
            <person name="Worsham P.L."/>
            <person name="Nikolich M.P."/>
            <person name="Riley D.R."/>
            <person name="Sebastian Y."/>
            <person name="Mou S."/>
            <person name="Achtman M."/>
            <person name="Lindler L.E."/>
            <person name="Ravel J."/>
        </authorList>
    </citation>
    <scope>NUCLEOTIDE SEQUENCE [LARGE SCALE GENOMIC DNA]</scope>
    <source>
        <strain>Angola</strain>
    </source>
</reference>
<organism>
    <name type="scientific">Yersinia pestis bv. Antiqua (strain Angola)</name>
    <dbReference type="NCBI Taxonomy" id="349746"/>
    <lineage>
        <taxon>Bacteria</taxon>
        <taxon>Pseudomonadati</taxon>
        <taxon>Pseudomonadota</taxon>
        <taxon>Gammaproteobacteria</taxon>
        <taxon>Enterobacterales</taxon>
        <taxon>Yersiniaceae</taxon>
        <taxon>Yersinia</taxon>
    </lineage>
</organism>